<proteinExistence type="evidence at transcript level"/>
<dbReference type="EMBL" id="CH476594">
    <property type="protein sequence ID" value="EAU39561.1"/>
    <property type="molecule type" value="Genomic_DNA"/>
</dbReference>
<dbReference type="RefSeq" id="XP_001211001.1">
    <property type="nucleotide sequence ID" value="XM_001211001.1"/>
</dbReference>
<dbReference type="SMR" id="Q0CZG9"/>
<dbReference type="STRING" id="341663.Q0CZG9"/>
<dbReference type="GlyCosmos" id="Q0CZG9">
    <property type="glycosylation" value="1 site, No reported glycans"/>
</dbReference>
<dbReference type="EnsemblFungi" id="EAU39561">
    <property type="protein sequence ID" value="EAU39561"/>
    <property type="gene ID" value="ATEG_00915"/>
</dbReference>
<dbReference type="GeneID" id="4355678"/>
<dbReference type="VEuPathDB" id="FungiDB:ATEG_00915"/>
<dbReference type="eggNOG" id="KOG2504">
    <property type="taxonomic scope" value="Eukaryota"/>
</dbReference>
<dbReference type="HOGENOM" id="CLU_001265_1_3_1"/>
<dbReference type="OMA" id="ERLAPCH"/>
<dbReference type="OrthoDB" id="6499973at2759"/>
<dbReference type="Proteomes" id="UP000007963">
    <property type="component" value="Unassembled WGS sequence"/>
</dbReference>
<dbReference type="GO" id="GO:0005886">
    <property type="term" value="C:plasma membrane"/>
    <property type="evidence" value="ECO:0007669"/>
    <property type="project" value="UniProtKB-SubCell"/>
</dbReference>
<dbReference type="GO" id="GO:0022857">
    <property type="term" value="F:transmembrane transporter activity"/>
    <property type="evidence" value="ECO:0007669"/>
    <property type="project" value="InterPro"/>
</dbReference>
<dbReference type="Gene3D" id="1.20.1250.20">
    <property type="entry name" value="MFS general substrate transporter like domains"/>
    <property type="match status" value="2"/>
</dbReference>
<dbReference type="InterPro" id="IPR011701">
    <property type="entry name" value="MFS"/>
</dbReference>
<dbReference type="InterPro" id="IPR020846">
    <property type="entry name" value="MFS_dom"/>
</dbReference>
<dbReference type="InterPro" id="IPR036259">
    <property type="entry name" value="MFS_trans_sf"/>
</dbReference>
<dbReference type="InterPro" id="IPR050327">
    <property type="entry name" value="Proton-linked_MCT"/>
</dbReference>
<dbReference type="PANTHER" id="PTHR11360">
    <property type="entry name" value="MONOCARBOXYLATE TRANSPORTER"/>
    <property type="match status" value="1"/>
</dbReference>
<dbReference type="PANTHER" id="PTHR11360:SF177">
    <property type="entry name" value="RIBOFLAVIN TRANSPORTER MCH5"/>
    <property type="match status" value="1"/>
</dbReference>
<dbReference type="Pfam" id="PF07690">
    <property type="entry name" value="MFS_1"/>
    <property type="match status" value="1"/>
</dbReference>
<dbReference type="SUPFAM" id="SSF103473">
    <property type="entry name" value="MFS general substrate transporter"/>
    <property type="match status" value="1"/>
</dbReference>
<dbReference type="PROSITE" id="PS50850">
    <property type="entry name" value="MFS"/>
    <property type="match status" value="1"/>
</dbReference>
<reference key="1">
    <citation type="submission" date="2005-09" db="EMBL/GenBank/DDBJ databases">
        <title>Annotation of the Aspergillus terreus NIH2624 genome.</title>
        <authorList>
            <person name="Birren B.W."/>
            <person name="Lander E.S."/>
            <person name="Galagan J.E."/>
            <person name="Nusbaum C."/>
            <person name="Devon K."/>
            <person name="Henn M."/>
            <person name="Ma L.-J."/>
            <person name="Jaffe D.B."/>
            <person name="Butler J."/>
            <person name="Alvarez P."/>
            <person name="Gnerre S."/>
            <person name="Grabherr M."/>
            <person name="Kleber M."/>
            <person name="Mauceli E.W."/>
            <person name="Brockman W."/>
            <person name="Rounsley S."/>
            <person name="Young S.K."/>
            <person name="LaButti K."/>
            <person name="Pushparaj V."/>
            <person name="DeCaprio D."/>
            <person name="Crawford M."/>
            <person name="Koehrsen M."/>
            <person name="Engels R."/>
            <person name="Montgomery P."/>
            <person name="Pearson M."/>
            <person name="Howarth C."/>
            <person name="Larson L."/>
            <person name="Luoma S."/>
            <person name="White J."/>
            <person name="Alvarado L."/>
            <person name="Kodira C.D."/>
            <person name="Zeng Q."/>
            <person name="Oleary S."/>
            <person name="Yandava C."/>
            <person name="Denning D.W."/>
            <person name="Nierman W.C."/>
            <person name="Milne T."/>
            <person name="Madden K."/>
        </authorList>
    </citation>
    <scope>NUCLEOTIDE SEQUENCE [LARGE SCALE GENOMIC DNA]</scope>
    <source>
        <strain>NIH 2624 / FGSC A1156</strain>
    </source>
</reference>
<reference key="2">
    <citation type="journal article" date="2020" name="J. Nat. Prod.">
        <title>Discovery and characterization of a PKS-NRPS hybrid in Aspergillus terreus by genome mining.</title>
        <authorList>
            <person name="Tang S."/>
            <person name="Zhang W."/>
            <person name="Li Z."/>
            <person name="Li H."/>
            <person name="Geng C."/>
            <person name="Huang X."/>
            <person name="Lu X."/>
        </authorList>
    </citation>
    <scope>INDUCTION</scope>
    <scope>FUNCTION</scope>
    <scope>DISRUPTION PHENOTYPE</scope>
</reference>
<protein>
    <recommendedName>
        <fullName evidence="4">MFS-type transporter pytF</fullName>
    </recommendedName>
    <alternativeName>
        <fullName evidence="4">Pyranterreones biosynthesis cluster protein F</fullName>
    </alternativeName>
</protein>
<comment type="function">
    <text evidence="3">MFS-type transporter; part of the gene cluster that mediates the biosynthesis of pyranterreones, a family of antioxidative compounds (PubMed:32077283). Directly involved in the secretion of pyranterreones (PubMed:32077283).</text>
</comment>
<comment type="subcellular location">
    <subcellularLocation>
        <location evidence="6">Cell membrane</location>
        <topology evidence="1">Multi-pass membrane protein</topology>
    </subcellularLocation>
</comment>
<comment type="induction">
    <text evidence="3">Expression is positively regulated by the cluster-specific transcription factor pytR.</text>
</comment>
<comment type="disruption phenotype">
    <text evidence="3">Blocks the secretions of pyranterreones.</text>
</comment>
<comment type="similarity">
    <text evidence="5">Belongs to the major facilitator superfamily. Monocarboxylate porter (TC 2.A.1.13) family.</text>
</comment>
<evidence type="ECO:0000255" key="1"/>
<evidence type="ECO:0000255" key="2">
    <source>
        <dbReference type="PROSITE-ProRule" id="PRU00498"/>
    </source>
</evidence>
<evidence type="ECO:0000269" key="3">
    <source>
    </source>
</evidence>
<evidence type="ECO:0000303" key="4">
    <source>
    </source>
</evidence>
<evidence type="ECO:0000305" key="5"/>
<evidence type="ECO:0000305" key="6">
    <source>
    </source>
</evidence>
<organism>
    <name type="scientific">Aspergillus terreus (strain NIH 2624 / FGSC A1156)</name>
    <dbReference type="NCBI Taxonomy" id="341663"/>
    <lineage>
        <taxon>Eukaryota</taxon>
        <taxon>Fungi</taxon>
        <taxon>Dikarya</taxon>
        <taxon>Ascomycota</taxon>
        <taxon>Pezizomycotina</taxon>
        <taxon>Eurotiomycetes</taxon>
        <taxon>Eurotiomycetidae</taxon>
        <taxon>Eurotiales</taxon>
        <taxon>Aspergillaceae</taxon>
        <taxon>Aspergillus</taxon>
        <taxon>Aspergillus subgen. Circumdati</taxon>
    </lineage>
</organism>
<name>PYTF_ASPTN</name>
<sequence>MTTKEAIADMALEAQEEDDAGPPDGGFRAWLVVLGGFLAYFVTFGMLNSFGTFQEYYGEKLLPGRSTSEISWIGSLQLFLLFIGGLFFGPVFDAKGSKVLFIPGTLLLSLSQMMVSLCKEYYQFILAQSLLFGIAVAMLFYPTISAISHWFHHRRGLAMGIVLTGSSLGGIAWPLILERLFAVVGFPWGLRIVGFISFALLAPACFMVIPRLPPRKSGGLSKADLSEGLKDRRYWLTVVGMLFVIWGMFIPFYYIPLFAMDHGVNSSFANSLISILNAGSFVGRIVSGALADKLGR</sequence>
<feature type="chain" id="PRO_0000450471" description="MFS-type transporter pytF">
    <location>
        <begin position="1"/>
        <end position="296"/>
    </location>
</feature>
<feature type="transmembrane region" description="Helical" evidence="1">
    <location>
        <begin position="30"/>
        <end position="50"/>
    </location>
</feature>
<feature type="transmembrane region" description="Helical" evidence="1">
    <location>
        <begin position="72"/>
        <end position="92"/>
    </location>
</feature>
<feature type="transmembrane region" description="Helical" evidence="1">
    <location>
        <begin position="98"/>
        <end position="118"/>
    </location>
</feature>
<feature type="transmembrane region" description="Helical" evidence="1">
    <location>
        <begin position="124"/>
        <end position="144"/>
    </location>
</feature>
<feature type="transmembrane region" description="Helical" evidence="1">
    <location>
        <begin position="157"/>
        <end position="177"/>
    </location>
</feature>
<feature type="transmembrane region" description="Helical" evidence="1">
    <location>
        <begin position="180"/>
        <end position="200"/>
    </location>
</feature>
<feature type="transmembrane region" description="Helical" evidence="1">
    <location>
        <begin position="238"/>
        <end position="258"/>
    </location>
</feature>
<feature type="transmembrane region" description="Helical" evidence="1">
    <location>
        <begin position="271"/>
        <end position="291"/>
    </location>
</feature>
<feature type="glycosylation site" description="N-linked (GlcNAc...) asparagine" evidence="2">
    <location>
        <position position="265"/>
    </location>
</feature>
<keyword id="KW-1003">Cell membrane</keyword>
<keyword id="KW-0325">Glycoprotein</keyword>
<keyword id="KW-0472">Membrane</keyword>
<keyword id="KW-1185">Reference proteome</keyword>
<keyword id="KW-0812">Transmembrane</keyword>
<keyword id="KW-1133">Transmembrane helix</keyword>
<keyword id="KW-0813">Transport</keyword>
<gene>
    <name evidence="4" type="primary">pytF</name>
    <name type="ORF">ATEG_00915</name>
</gene>
<accession>Q0CZG9</accession>